<gene>
    <name type="primary">RALFL6</name>
    <name type="ordered locus">At1g60625</name>
    <name type="ORF">F8A5</name>
</gene>
<proteinExistence type="inferred from homology"/>
<evidence type="ECO:0000250" key="1"/>
<evidence type="ECO:0000255" key="2"/>
<evidence type="ECO:0000305" key="3"/>
<dbReference type="EMBL" id="AC002292">
    <property type="status" value="NOT_ANNOTATED_CDS"/>
    <property type="molecule type" value="Genomic_DNA"/>
</dbReference>
<dbReference type="EMBL" id="CP002684">
    <property type="protein sequence ID" value="AEE33707.1"/>
    <property type="molecule type" value="Genomic_DNA"/>
</dbReference>
<dbReference type="RefSeq" id="NP_001077744.1">
    <property type="nucleotide sequence ID" value="NM_001084275.1"/>
</dbReference>
<dbReference type="STRING" id="3702.A8MQM2"/>
<dbReference type="PaxDb" id="3702-AT1G60625.1"/>
<dbReference type="EnsemblPlants" id="AT1G60625.1">
    <property type="protein sequence ID" value="AT1G60625.1"/>
    <property type="gene ID" value="AT1G60625"/>
</dbReference>
<dbReference type="GeneID" id="5007821"/>
<dbReference type="Gramene" id="AT1G60625.1">
    <property type="protein sequence ID" value="AT1G60625.1"/>
    <property type="gene ID" value="AT1G60625"/>
</dbReference>
<dbReference type="KEGG" id="ath:AT1G60625"/>
<dbReference type="Araport" id="AT1G60625"/>
<dbReference type="TAIR" id="AT1G60625">
    <property type="gene designation" value="RALFL6"/>
</dbReference>
<dbReference type="HOGENOM" id="CLU_184731_0_0_1"/>
<dbReference type="InParanoid" id="A8MQM2"/>
<dbReference type="OMA" id="CEISTHC"/>
<dbReference type="OrthoDB" id="1037778at2759"/>
<dbReference type="PhylomeDB" id="A8MQM2"/>
<dbReference type="PRO" id="PR:A8MQM2"/>
<dbReference type="Proteomes" id="UP000006548">
    <property type="component" value="Chromosome 1"/>
</dbReference>
<dbReference type="ExpressionAtlas" id="A8MQM2">
    <property type="expression patterns" value="baseline"/>
</dbReference>
<dbReference type="GO" id="GO:0048046">
    <property type="term" value="C:apoplast"/>
    <property type="evidence" value="ECO:0000250"/>
    <property type="project" value="TAIR"/>
</dbReference>
<dbReference type="GO" id="GO:0005179">
    <property type="term" value="F:hormone activity"/>
    <property type="evidence" value="ECO:0000250"/>
    <property type="project" value="UniProtKB"/>
</dbReference>
<dbReference type="GO" id="GO:0019722">
    <property type="term" value="P:calcium-mediated signaling"/>
    <property type="evidence" value="ECO:0000250"/>
    <property type="project" value="UniProtKB"/>
</dbReference>
<dbReference type="GO" id="GO:0007267">
    <property type="term" value="P:cell-cell signaling"/>
    <property type="evidence" value="ECO:0000250"/>
    <property type="project" value="TAIR"/>
</dbReference>
<dbReference type="GO" id="GO:0040008">
    <property type="term" value="P:regulation of growth"/>
    <property type="evidence" value="ECO:0007669"/>
    <property type="project" value="UniProtKB-ARBA"/>
</dbReference>
<dbReference type="InterPro" id="IPR008801">
    <property type="entry name" value="RALF"/>
</dbReference>
<dbReference type="PANTHER" id="PTHR34270">
    <property type="entry name" value="PROTEIN RALF-LIKE 15-RELATED"/>
    <property type="match status" value="1"/>
</dbReference>
<dbReference type="PANTHER" id="PTHR34270:SF3">
    <property type="entry name" value="PROTEIN RALF-LIKE 16-RELATED"/>
    <property type="match status" value="1"/>
</dbReference>
<dbReference type="Pfam" id="PF05498">
    <property type="entry name" value="RALF"/>
    <property type="match status" value="1"/>
</dbReference>
<accession>A8MQM2</accession>
<organism>
    <name type="scientific">Arabidopsis thaliana</name>
    <name type="common">Mouse-ear cress</name>
    <dbReference type="NCBI Taxonomy" id="3702"/>
    <lineage>
        <taxon>Eukaryota</taxon>
        <taxon>Viridiplantae</taxon>
        <taxon>Streptophyta</taxon>
        <taxon>Embryophyta</taxon>
        <taxon>Tracheophyta</taxon>
        <taxon>Spermatophyta</taxon>
        <taxon>Magnoliopsida</taxon>
        <taxon>eudicotyledons</taxon>
        <taxon>Gunneridae</taxon>
        <taxon>Pentapetalae</taxon>
        <taxon>rosids</taxon>
        <taxon>malvids</taxon>
        <taxon>Brassicales</taxon>
        <taxon>Brassicaceae</taxon>
        <taxon>Camelineae</taxon>
        <taxon>Arabidopsis</taxon>
    </lineage>
</organism>
<comment type="function">
    <text evidence="1">Cell signaling peptide that may regulate plant stress, growth, and development. Mediates a rapid alkalinization of extracellular space by mediating a transient increase in the cytoplasmic Ca(2+) concentration leading to a calcium-dependent signaling events through a cell surface receptor and a concomitant activation of some intracellular mitogen-activated protein kinases (By similarity).</text>
</comment>
<comment type="subcellular location">
    <subcellularLocation>
        <location evidence="1">Secreted</location>
    </subcellularLocation>
</comment>
<comment type="similarity">
    <text evidence="3">Belongs to the plant rapid alkalinization factor (RALF) family.</text>
</comment>
<feature type="signal peptide" evidence="2">
    <location>
        <begin position="1"/>
        <end position="29"/>
    </location>
</feature>
<feature type="chain" id="PRO_0000420297" description="Protein RALF-like 6">
    <location>
        <begin position="30"/>
        <end position="81"/>
    </location>
</feature>
<feature type="disulfide bond" evidence="1">
    <location>
        <begin position="46"/>
        <end position="54"/>
    </location>
</feature>
<feature type="disulfide bond" evidence="1">
    <location>
        <begin position="66"/>
        <end position="72"/>
    </location>
</feature>
<sequence length="81" mass="9035">MAAHKKSHIRIFFVSVMIILSLFSGFGEGQTYINYNGMKGDIIPGCSSKNPKECVKIPAYSYNRGCEISTRCQRQQHSSSS</sequence>
<protein>
    <recommendedName>
        <fullName>Protein RALF-like 6</fullName>
    </recommendedName>
</protein>
<reference key="1">
    <citation type="journal article" date="2000" name="Nature">
        <title>Sequence and analysis of chromosome 1 of the plant Arabidopsis thaliana.</title>
        <authorList>
            <person name="Theologis A."/>
            <person name="Ecker J.R."/>
            <person name="Palm C.J."/>
            <person name="Federspiel N.A."/>
            <person name="Kaul S."/>
            <person name="White O."/>
            <person name="Alonso J."/>
            <person name="Altafi H."/>
            <person name="Araujo R."/>
            <person name="Bowman C.L."/>
            <person name="Brooks S.Y."/>
            <person name="Buehler E."/>
            <person name="Chan A."/>
            <person name="Chao Q."/>
            <person name="Chen H."/>
            <person name="Cheuk R.F."/>
            <person name="Chin C.W."/>
            <person name="Chung M.K."/>
            <person name="Conn L."/>
            <person name="Conway A.B."/>
            <person name="Conway A.R."/>
            <person name="Creasy T.H."/>
            <person name="Dewar K."/>
            <person name="Dunn P."/>
            <person name="Etgu P."/>
            <person name="Feldblyum T.V."/>
            <person name="Feng J.-D."/>
            <person name="Fong B."/>
            <person name="Fujii C.Y."/>
            <person name="Gill J.E."/>
            <person name="Goldsmith A.D."/>
            <person name="Haas B."/>
            <person name="Hansen N.F."/>
            <person name="Hughes B."/>
            <person name="Huizar L."/>
            <person name="Hunter J.L."/>
            <person name="Jenkins J."/>
            <person name="Johnson-Hopson C."/>
            <person name="Khan S."/>
            <person name="Khaykin E."/>
            <person name="Kim C.J."/>
            <person name="Koo H.L."/>
            <person name="Kremenetskaia I."/>
            <person name="Kurtz D.B."/>
            <person name="Kwan A."/>
            <person name="Lam B."/>
            <person name="Langin-Hooper S."/>
            <person name="Lee A."/>
            <person name="Lee J.M."/>
            <person name="Lenz C.A."/>
            <person name="Li J.H."/>
            <person name="Li Y.-P."/>
            <person name="Lin X."/>
            <person name="Liu S.X."/>
            <person name="Liu Z.A."/>
            <person name="Luros J.S."/>
            <person name="Maiti R."/>
            <person name="Marziali A."/>
            <person name="Militscher J."/>
            <person name="Miranda M."/>
            <person name="Nguyen M."/>
            <person name="Nierman W.C."/>
            <person name="Osborne B.I."/>
            <person name="Pai G."/>
            <person name="Peterson J."/>
            <person name="Pham P.K."/>
            <person name="Rizzo M."/>
            <person name="Rooney T."/>
            <person name="Rowley D."/>
            <person name="Sakano H."/>
            <person name="Salzberg S.L."/>
            <person name="Schwartz J.R."/>
            <person name="Shinn P."/>
            <person name="Southwick A.M."/>
            <person name="Sun H."/>
            <person name="Tallon L.J."/>
            <person name="Tambunga G."/>
            <person name="Toriumi M.J."/>
            <person name="Town C.D."/>
            <person name="Utterback T."/>
            <person name="Van Aken S."/>
            <person name="Vaysberg M."/>
            <person name="Vysotskaia V.S."/>
            <person name="Walker M."/>
            <person name="Wu D."/>
            <person name="Yu G."/>
            <person name="Fraser C.M."/>
            <person name="Venter J.C."/>
            <person name="Davis R.W."/>
        </authorList>
    </citation>
    <scope>NUCLEOTIDE SEQUENCE [LARGE SCALE GENOMIC DNA]</scope>
    <source>
        <strain>cv. Columbia</strain>
    </source>
</reference>
<reference key="2">
    <citation type="journal article" date="2017" name="Plant J.">
        <title>Araport11: a complete reannotation of the Arabidopsis thaliana reference genome.</title>
        <authorList>
            <person name="Cheng C.Y."/>
            <person name="Krishnakumar V."/>
            <person name="Chan A.P."/>
            <person name="Thibaud-Nissen F."/>
            <person name="Schobel S."/>
            <person name="Town C.D."/>
        </authorList>
    </citation>
    <scope>GENOME REANNOTATION</scope>
    <source>
        <strain>cv. Columbia</strain>
    </source>
</reference>
<reference key="3">
    <citation type="journal article" date="2002" name="In Silico Biol.">
        <title>Peptomics, identification of novel cationic Arabidopsis peptides with conserved sequence motifs.</title>
        <authorList>
            <person name="Olsen A.N."/>
            <person name="Mundy J."/>
            <person name="Skriver K."/>
        </authorList>
    </citation>
    <scope>GENE FAMILY</scope>
    <scope>NOMENCLATURE</scope>
</reference>
<keyword id="KW-1015">Disulfide bond</keyword>
<keyword id="KW-0372">Hormone</keyword>
<keyword id="KW-1185">Reference proteome</keyword>
<keyword id="KW-0964">Secreted</keyword>
<keyword id="KW-0732">Signal</keyword>
<name>RLF6_ARATH</name>